<evidence type="ECO:0000250" key="1"/>
<evidence type="ECO:0000305" key="2"/>
<comment type="subcellular location">
    <subcellularLocation>
        <location evidence="1">Secreted</location>
    </subcellularLocation>
    <text evidence="1">Sperm surface.</text>
</comment>
<comment type="similarity">
    <text evidence="2">Belongs to the beta-microseminoprotein family.</text>
</comment>
<feature type="signal peptide" evidence="1">
    <location>
        <begin position="1"/>
        <end position="20"/>
    </location>
</feature>
<feature type="chain" id="PRO_0000019274" description="Beta-microseminoprotein A1">
    <location>
        <begin position="21"/>
        <end position="113"/>
    </location>
</feature>
<feature type="disulfide bond" evidence="1">
    <location>
        <begin position="22"/>
        <end position="70"/>
    </location>
</feature>
<feature type="disulfide bond" evidence="1">
    <location>
        <begin position="38"/>
        <end position="62"/>
    </location>
</feature>
<feature type="disulfide bond" evidence="1">
    <location>
        <begin position="57"/>
        <end position="93"/>
    </location>
</feature>
<feature type="disulfide bond" evidence="1">
    <location>
        <begin position="60"/>
        <end position="69"/>
    </location>
</feature>
<feature type="disulfide bond" evidence="1">
    <location>
        <begin position="84"/>
        <end position="107"/>
    </location>
</feature>
<dbReference type="EMBL" id="AJ010158">
    <property type="protein sequence ID" value="CAB38124.2"/>
    <property type="molecule type" value="Genomic_DNA"/>
</dbReference>
<dbReference type="SMR" id="O97936"/>
<dbReference type="GO" id="GO:0005576">
    <property type="term" value="C:extracellular region"/>
    <property type="evidence" value="ECO:0000304"/>
    <property type="project" value="UniProtKB"/>
</dbReference>
<dbReference type="FunFam" id="2.10.70.10:FF:000137">
    <property type="entry name" value="Beta-microseminoprotein"/>
    <property type="match status" value="1"/>
</dbReference>
<dbReference type="FunFam" id="2.20.25.590:FF:000001">
    <property type="entry name" value="Beta-microseminoprotein"/>
    <property type="match status" value="1"/>
</dbReference>
<dbReference type="Gene3D" id="2.20.25.590">
    <property type="match status" value="1"/>
</dbReference>
<dbReference type="Gene3D" id="2.10.70.10">
    <property type="entry name" value="Complement Module, domain 1"/>
    <property type="match status" value="1"/>
</dbReference>
<dbReference type="InterPro" id="IPR008735">
    <property type="entry name" value="PSP94"/>
</dbReference>
<dbReference type="PANTHER" id="PTHR10500">
    <property type="entry name" value="BETA-MICROSEMINOPROTEIN"/>
    <property type="match status" value="1"/>
</dbReference>
<dbReference type="PANTHER" id="PTHR10500:SF8">
    <property type="entry name" value="BETA-MICROSEMINOPROTEIN"/>
    <property type="match status" value="1"/>
</dbReference>
<dbReference type="Pfam" id="PF05825">
    <property type="entry name" value="PSP94"/>
    <property type="match status" value="1"/>
</dbReference>
<organism>
    <name type="scientific">Saguinus oedipus</name>
    <name type="common">Cotton-top tamarin</name>
    <dbReference type="NCBI Taxonomy" id="9490"/>
    <lineage>
        <taxon>Eukaryota</taxon>
        <taxon>Metazoa</taxon>
        <taxon>Chordata</taxon>
        <taxon>Craniata</taxon>
        <taxon>Vertebrata</taxon>
        <taxon>Euteleostomi</taxon>
        <taxon>Mammalia</taxon>
        <taxon>Eutheria</taxon>
        <taxon>Euarchontoglires</taxon>
        <taxon>Primates</taxon>
        <taxon>Haplorrhini</taxon>
        <taxon>Platyrrhini</taxon>
        <taxon>Cebidae</taxon>
        <taxon>Callitrichinae</taxon>
        <taxon>Saguinus</taxon>
    </lineage>
</organism>
<gene>
    <name type="primary">MSPA</name>
</gene>
<keyword id="KW-1015">Disulfide bond</keyword>
<keyword id="KW-0964">Secreted</keyword>
<keyword id="KW-0732">Signal</keyword>
<name>MSPA_SAGOE</name>
<proteinExistence type="inferred from homology"/>
<protein>
    <recommendedName>
        <fullName>Beta-microseminoprotein A1</fullName>
        <shortName>msp-A1</shortName>
    </recommendedName>
</protein>
<sequence>MNVLLGGLVIFATFVTLCNGSCYLMPNKMVPGDSTKECTDLKGNKHPLNSRWKTENCDECDCLEKEISCCSLVAIPVGYDQDNCQKIFKQEDCKYIVVEKKDPNKTCEVTQWI</sequence>
<reference key="1">
    <citation type="journal article" date="2008" name="DNA Cell Biol.">
        <title>The cotton-top tamarin (Saguinus oedipus) has five beta-microseminoprotein genes, two of which are pseudogenes.</title>
        <authorList>
            <person name="Valtonen-Andre C."/>
            <person name="Lundwall A."/>
        </authorList>
    </citation>
    <scope>NUCLEOTIDE SEQUENCE [GENOMIC DNA]</scope>
</reference>
<reference evidence="2" key="2">
    <citation type="journal article" date="1999" name="Eur. J. Biochem.">
        <title>New world, but not old world, monkeys carry several genes encoding beta-microseminoprotein.</title>
        <authorList>
            <person name="Maekinen M."/>
            <person name="Valtonen-Andre C."/>
            <person name="Lundwall A."/>
        </authorList>
    </citation>
    <scope>NUCLEOTIDE SEQUENCE [GENOMIC DNA] OF 2-113</scope>
</reference>
<accession>O97936</accession>